<gene>
    <name evidence="1" type="primary">mnmA</name>
    <name type="ordered locus">ECP_1128</name>
</gene>
<protein>
    <recommendedName>
        <fullName evidence="1">tRNA-specific 2-thiouridylase MnmA</fullName>
        <ecNumber evidence="1">2.8.1.13</ecNumber>
    </recommendedName>
</protein>
<organism>
    <name type="scientific">Escherichia coli O6:K15:H31 (strain 536 / UPEC)</name>
    <dbReference type="NCBI Taxonomy" id="362663"/>
    <lineage>
        <taxon>Bacteria</taxon>
        <taxon>Pseudomonadati</taxon>
        <taxon>Pseudomonadota</taxon>
        <taxon>Gammaproteobacteria</taxon>
        <taxon>Enterobacterales</taxon>
        <taxon>Enterobacteriaceae</taxon>
        <taxon>Escherichia</taxon>
    </lineage>
</organism>
<reference key="1">
    <citation type="journal article" date="2006" name="Mol. Microbiol.">
        <title>Role of pathogenicity island-associated integrases in the genome plasticity of uropathogenic Escherichia coli strain 536.</title>
        <authorList>
            <person name="Hochhut B."/>
            <person name="Wilde C."/>
            <person name="Balling G."/>
            <person name="Middendorf B."/>
            <person name="Dobrindt U."/>
            <person name="Brzuszkiewicz E."/>
            <person name="Gottschalk G."/>
            <person name="Carniel E."/>
            <person name="Hacker J."/>
        </authorList>
    </citation>
    <scope>NUCLEOTIDE SEQUENCE [LARGE SCALE GENOMIC DNA]</scope>
    <source>
        <strain>536 / UPEC</strain>
    </source>
</reference>
<comment type="function">
    <text evidence="1">Catalyzes the 2-thiolation of uridine at the wobble position (U34) of tRNA(Lys), tRNA(Glu) and tRNA(Gln), leading to the formation of s(2)U34, the first step of tRNA-mnm(5)s(2)U34 synthesis. Sulfur is provided by IscS, via a sulfur-relay system. Binds ATP and its substrate tRNAs.</text>
</comment>
<comment type="catalytic activity">
    <reaction evidence="1">
        <text>S-sulfanyl-L-cysteinyl-[protein] + uridine(34) in tRNA + AH2 + ATP = 2-thiouridine(34) in tRNA + L-cysteinyl-[protein] + A + AMP + diphosphate + H(+)</text>
        <dbReference type="Rhea" id="RHEA:47032"/>
        <dbReference type="Rhea" id="RHEA-COMP:10131"/>
        <dbReference type="Rhea" id="RHEA-COMP:11726"/>
        <dbReference type="Rhea" id="RHEA-COMP:11727"/>
        <dbReference type="Rhea" id="RHEA-COMP:11728"/>
        <dbReference type="ChEBI" id="CHEBI:13193"/>
        <dbReference type="ChEBI" id="CHEBI:15378"/>
        <dbReference type="ChEBI" id="CHEBI:17499"/>
        <dbReference type="ChEBI" id="CHEBI:29950"/>
        <dbReference type="ChEBI" id="CHEBI:30616"/>
        <dbReference type="ChEBI" id="CHEBI:33019"/>
        <dbReference type="ChEBI" id="CHEBI:61963"/>
        <dbReference type="ChEBI" id="CHEBI:65315"/>
        <dbReference type="ChEBI" id="CHEBI:87170"/>
        <dbReference type="ChEBI" id="CHEBI:456215"/>
        <dbReference type="EC" id="2.8.1.13"/>
    </reaction>
</comment>
<comment type="subunit">
    <text evidence="1">Interacts with TusE.</text>
</comment>
<comment type="subcellular location">
    <subcellularLocation>
        <location evidence="1">Cytoplasm</location>
    </subcellularLocation>
</comment>
<comment type="similarity">
    <text evidence="1">Belongs to the MnmA/TRMU family.</text>
</comment>
<proteinExistence type="inferred from homology"/>
<accession>Q0TIU0</accession>
<keyword id="KW-0067">ATP-binding</keyword>
<keyword id="KW-0963">Cytoplasm</keyword>
<keyword id="KW-1015">Disulfide bond</keyword>
<keyword id="KW-0547">Nucleotide-binding</keyword>
<keyword id="KW-0694">RNA-binding</keyword>
<keyword id="KW-0808">Transferase</keyword>
<keyword id="KW-0819">tRNA processing</keyword>
<keyword id="KW-0820">tRNA-binding</keyword>
<evidence type="ECO:0000255" key="1">
    <source>
        <dbReference type="HAMAP-Rule" id="MF_00144"/>
    </source>
</evidence>
<dbReference type="EC" id="2.8.1.13" evidence="1"/>
<dbReference type="EMBL" id="CP000247">
    <property type="protein sequence ID" value="ABG69139.1"/>
    <property type="molecule type" value="Genomic_DNA"/>
</dbReference>
<dbReference type="RefSeq" id="WP_001298466.1">
    <property type="nucleotide sequence ID" value="NC_008253.1"/>
</dbReference>
<dbReference type="SMR" id="Q0TIU0"/>
<dbReference type="KEGG" id="ecp:ECP_1128"/>
<dbReference type="HOGENOM" id="CLU_035188_1_0_6"/>
<dbReference type="Proteomes" id="UP000009182">
    <property type="component" value="Chromosome"/>
</dbReference>
<dbReference type="GO" id="GO:0005737">
    <property type="term" value="C:cytoplasm"/>
    <property type="evidence" value="ECO:0007669"/>
    <property type="project" value="UniProtKB-SubCell"/>
</dbReference>
<dbReference type="GO" id="GO:0005524">
    <property type="term" value="F:ATP binding"/>
    <property type="evidence" value="ECO:0007669"/>
    <property type="project" value="UniProtKB-KW"/>
</dbReference>
<dbReference type="GO" id="GO:0000049">
    <property type="term" value="F:tRNA binding"/>
    <property type="evidence" value="ECO:0007669"/>
    <property type="project" value="UniProtKB-KW"/>
</dbReference>
<dbReference type="GO" id="GO:0103016">
    <property type="term" value="F:tRNA-uridine 2-sulfurtransferase activity"/>
    <property type="evidence" value="ECO:0007669"/>
    <property type="project" value="UniProtKB-EC"/>
</dbReference>
<dbReference type="GO" id="GO:0002143">
    <property type="term" value="P:tRNA wobble position uridine thiolation"/>
    <property type="evidence" value="ECO:0007669"/>
    <property type="project" value="TreeGrafter"/>
</dbReference>
<dbReference type="CDD" id="cd01998">
    <property type="entry name" value="MnmA_TRMU-like"/>
    <property type="match status" value="1"/>
</dbReference>
<dbReference type="FunFam" id="2.30.30.280:FF:000001">
    <property type="entry name" value="tRNA-specific 2-thiouridylase MnmA"/>
    <property type="match status" value="1"/>
</dbReference>
<dbReference type="FunFam" id="2.40.30.10:FF:000023">
    <property type="entry name" value="tRNA-specific 2-thiouridylase MnmA"/>
    <property type="match status" value="1"/>
</dbReference>
<dbReference type="FunFam" id="3.40.50.620:FF:000004">
    <property type="entry name" value="tRNA-specific 2-thiouridylase MnmA"/>
    <property type="match status" value="1"/>
</dbReference>
<dbReference type="Gene3D" id="2.30.30.280">
    <property type="entry name" value="Adenine nucleotide alpha hydrolases-like domains"/>
    <property type="match status" value="1"/>
</dbReference>
<dbReference type="Gene3D" id="3.40.50.620">
    <property type="entry name" value="HUPs"/>
    <property type="match status" value="1"/>
</dbReference>
<dbReference type="Gene3D" id="2.40.30.10">
    <property type="entry name" value="Translation factors"/>
    <property type="match status" value="1"/>
</dbReference>
<dbReference type="HAMAP" id="MF_00144">
    <property type="entry name" value="tRNA_thiouridyl_MnmA"/>
    <property type="match status" value="1"/>
</dbReference>
<dbReference type="InterPro" id="IPR004506">
    <property type="entry name" value="MnmA-like"/>
</dbReference>
<dbReference type="InterPro" id="IPR046885">
    <property type="entry name" value="MnmA-like_C"/>
</dbReference>
<dbReference type="InterPro" id="IPR046884">
    <property type="entry name" value="MnmA-like_central"/>
</dbReference>
<dbReference type="InterPro" id="IPR023382">
    <property type="entry name" value="MnmA-like_central_sf"/>
</dbReference>
<dbReference type="InterPro" id="IPR014729">
    <property type="entry name" value="Rossmann-like_a/b/a_fold"/>
</dbReference>
<dbReference type="NCBIfam" id="NF001138">
    <property type="entry name" value="PRK00143.1"/>
    <property type="match status" value="1"/>
</dbReference>
<dbReference type="NCBIfam" id="TIGR00420">
    <property type="entry name" value="trmU"/>
    <property type="match status" value="1"/>
</dbReference>
<dbReference type="PANTHER" id="PTHR11933:SF5">
    <property type="entry name" value="MITOCHONDRIAL TRNA-SPECIFIC 2-THIOURIDYLASE 1"/>
    <property type="match status" value="1"/>
</dbReference>
<dbReference type="PANTHER" id="PTHR11933">
    <property type="entry name" value="TRNA 5-METHYLAMINOMETHYL-2-THIOURIDYLATE -METHYLTRANSFERASE"/>
    <property type="match status" value="1"/>
</dbReference>
<dbReference type="Pfam" id="PF03054">
    <property type="entry name" value="tRNA_Me_trans"/>
    <property type="match status" value="1"/>
</dbReference>
<dbReference type="Pfam" id="PF20258">
    <property type="entry name" value="tRNA_Me_trans_C"/>
    <property type="match status" value="1"/>
</dbReference>
<dbReference type="Pfam" id="PF20259">
    <property type="entry name" value="tRNA_Me_trans_M"/>
    <property type="match status" value="1"/>
</dbReference>
<dbReference type="SUPFAM" id="SSF52402">
    <property type="entry name" value="Adenine nucleotide alpha hydrolases-like"/>
    <property type="match status" value="1"/>
</dbReference>
<name>MNMA_ECOL5</name>
<feature type="chain" id="PRO_0000349632" description="tRNA-specific 2-thiouridylase MnmA">
    <location>
        <begin position="1"/>
        <end position="368"/>
    </location>
</feature>
<feature type="region of interest" description="Interaction with target base in tRNA" evidence="1">
    <location>
        <begin position="97"/>
        <end position="99"/>
    </location>
</feature>
<feature type="region of interest" description="Interaction with tRNA" evidence="1">
    <location>
        <begin position="149"/>
        <end position="151"/>
    </location>
</feature>
<feature type="region of interest" description="Interaction with tRNA" evidence="1">
    <location>
        <begin position="311"/>
        <end position="312"/>
    </location>
</feature>
<feature type="active site" description="Nucleophile" evidence="1">
    <location>
        <position position="102"/>
    </location>
</feature>
<feature type="active site" description="Cysteine persulfide intermediate" evidence="1">
    <location>
        <position position="199"/>
    </location>
</feature>
<feature type="binding site" evidence="1">
    <location>
        <begin position="11"/>
        <end position="18"/>
    </location>
    <ligand>
        <name>ATP</name>
        <dbReference type="ChEBI" id="CHEBI:30616"/>
    </ligand>
</feature>
<feature type="binding site" evidence="1">
    <location>
        <position position="37"/>
    </location>
    <ligand>
        <name>ATP</name>
        <dbReference type="ChEBI" id="CHEBI:30616"/>
    </ligand>
</feature>
<feature type="binding site" evidence="1">
    <location>
        <position position="127"/>
    </location>
    <ligand>
        <name>ATP</name>
        <dbReference type="ChEBI" id="CHEBI:30616"/>
    </ligand>
</feature>
<feature type="site" description="Interaction with tRNA" evidence="1">
    <location>
        <position position="128"/>
    </location>
</feature>
<feature type="site" description="Interaction with tRNA" evidence="1">
    <location>
        <position position="344"/>
    </location>
</feature>
<feature type="disulfide bond" description="Alternate" evidence="1">
    <location>
        <begin position="102"/>
        <end position="199"/>
    </location>
</feature>
<sequence>MSETAKKVIVGMSGGVDSSVSAWLLQQQGYQVEGLFMKNWEEDDGEEYCTAAADLADAQAVCDKLGIELHTVNFAAEYWDNVFELFLAEYKAGRTPNPDILCNKEIKFKAFLEFAAEDLGADYIATGHYVRRADVDGKSRLLRGLDSNKDQSYFLYTLSHEQIAQSLFPVGELEKPQVRKIAEDLGLVTAKKKDSTGICFIGERKFREFLGRYLPAQPGKIITVDGDEIGEHQGLMYHTLGQRKGLGIGGTKDGTEEPWYVVDKDVENNILIVAQGHEHPRLMSVGLIAQQLHWVDREPFTGTMRCTVKTRYRQTDIPCTVKALDADRIEVIFDEPVAAVTPGQSAVFYNGEVCLGGGIIEQRLPLPV</sequence>